<name>TRUB_PROMS</name>
<proteinExistence type="inferred from homology"/>
<feature type="chain" id="PRO_1000084641" description="tRNA pseudouridine synthase B">
    <location>
        <begin position="1"/>
        <end position="307"/>
    </location>
</feature>
<feature type="active site" description="Nucleophile" evidence="1">
    <location>
        <position position="41"/>
    </location>
</feature>
<organism>
    <name type="scientific">Prochlorococcus marinus (strain AS9601)</name>
    <dbReference type="NCBI Taxonomy" id="146891"/>
    <lineage>
        <taxon>Bacteria</taxon>
        <taxon>Bacillati</taxon>
        <taxon>Cyanobacteriota</taxon>
        <taxon>Cyanophyceae</taxon>
        <taxon>Synechococcales</taxon>
        <taxon>Prochlorococcaceae</taxon>
        <taxon>Prochlorococcus</taxon>
    </lineage>
</organism>
<comment type="function">
    <text evidence="1">Responsible for synthesis of pseudouridine from uracil-55 in the psi GC loop of transfer RNAs.</text>
</comment>
<comment type="catalytic activity">
    <reaction evidence="1">
        <text>uridine(55) in tRNA = pseudouridine(55) in tRNA</text>
        <dbReference type="Rhea" id="RHEA:42532"/>
        <dbReference type="Rhea" id="RHEA-COMP:10101"/>
        <dbReference type="Rhea" id="RHEA-COMP:10102"/>
        <dbReference type="ChEBI" id="CHEBI:65314"/>
        <dbReference type="ChEBI" id="CHEBI:65315"/>
        <dbReference type="EC" id="5.4.99.25"/>
    </reaction>
</comment>
<comment type="similarity">
    <text evidence="1">Belongs to the pseudouridine synthase TruB family. Type 1 subfamily.</text>
</comment>
<evidence type="ECO:0000255" key="1">
    <source>
        <dbReference type="HAMAP-Rule" id="MF_01080"/>
    </source>
</evidence>
<keyword id="KW-0413">Isomerase</keyword>
<keyword id="KW-0819">tRNA processing</keyword>
<reference key="1">
    <citation type="journal article" date="2007" name="PLoS Genet.">
        <title>Patterns and implications of gene gain and loss in the evolution of Prochlorococcus.</title>
        <authorList>
            <person name="Kettler G.C."/>
            <person name="Martiny A.C."/>
            <person name="Huang K."/>
            <person name="Zucker J."/>
            <person name="Coleman M.L."/>
            <person name="Rodrigue S."/>
            <person name="Chen F."/>
            <person name="Lapidus A."/>
            <person name="Ferriera S."/>
            <person name="Johnson J."/>
            <person name="Steglich C."/>
            <person name="Church G.M."/>
            <person name="Richardson P."/>
            <person name="Chisholm S.W."/>
        </authorList>
    </citation>
    <scope>NUCLEOTIDE SEQUENCE [LARGE SCALE GENOMIC DNA]</scope>
    <source>
        <strain>AS9601</strain>
    </source>
</reference>
<sequence>METKDGFLVINKDKGCTSHDCVKQIRKLLNTKKVGHTGTLDPEVIGTLPIAIGNATRFIQYLPQGKTYIGEIKLGIRTSTDDIQGEIISQKSWPKISYKQLDQYFNRFRGIIKQIPPKVSSVHVNGERAYKKSFRNEIFELAPREVKIDELILMNWDQINGIIEIKIKCSAGTYIRSIARDIGETLNSAGCLLQLKRISACGFDEQNSIKISDIEKEKGKKNSKNFIIPTISALSHISTFVLSNEEQINFWQTGREIKVDINYFRESKSFDYKKPIKVIDNKQTLLGIGFLNKEQSNINPKLVLNAK</sequence>
<gene>
    <name evidence="1" type="primary">truB</name>
    <name type="ordered locus">A9601_15481</name>
</gene>
<protein>
    <recommendedName>
        <fullName evidence="1">tRNA pseudouridine synthase B</fullName>
        <ecNumber evidence="1">5.4.99.25</ecNumber>
    </recommendedName>
    <alternativeName>
        <fullName evidence="1">tRNA pseudouridine(55) synthase</fullName>
        <shortName evidence="1">Psi55 synthase</shortName>
    </alternativeName>
    <alternativeName>
        <fullName evidence="1">tRNA pseudouridylate synthase</fullName>
    </alternativeName>
    <alternativeName>
        <fullName evidence="1">tRNA-uridine isomerase</fullName>
    </alternativeName>
</protein>
<accession>A2BSS0</accession>
<dbReference type="EC" id="5.4.99.25" evidence="1"/>
<dbReference type="EMBL" id="CP000551">
    <property type="protein sequence ID" value="ABM70831.1"/>
    <property type="molecule type" value="Genomic_DNA"/>
</dbReference>
<dbReference type="RefSeq" id="WP_011818963.1">
    <property type="nucleotide sequence ID" value="NC_008816.1"/>
</dbReference>
<dbReference type="SMR" id="A2BSS0"/>
<dbReference type="STRING" id="146891.A9601_15481"/>
<dbReference type="KEGG" id="pmb:A9601_15481"/>
<dbReference type="eggNOG" id="COG0130">
    <property type="taxonomic scope" value="Bacteria"/>
</dbReference>
<dbReference type="HOGENOM" id="CLU_032087_0_0_3"/>
<dbReference type="OrthoDB" id="9802309at2"/>
<dbReference type="Proteomes" id="UP000002590">
    <property type="component" value="Chromosome"/>
</dbReference>
<dbReference type="GO" id="GO:0003723">
    <property type="term" value="F:RNA binding"/>
    <property type="evidence" value="ECO:0007669"/>
    <property type="project" value="InterPro"/>
</dbReference>
<dbReference type="GO" id="GO:0160148">
    <property type="term" value="F:tRNA pseudouridine(55) synthase activity"/>
    <property type="evidence" value="ECO:0007669"/>
    <property type="project" value="UniProtKB-EC"/>
</dbReference>
<dbReference type="GO" id="GO:1990481">
    <property type="term" value="P:mRNA pseudouridine synthesis"/>
    <property type="evidence" value="ECO:0007669"/>
    <property type="project" value="TreeGrafter"/>
</dbReference>
<dbReference type="GO" id="GO:0031119">
    <property type="term" value="P:tRNA pseudouridine synthesis"/>
    <property type="evidence" value="ECO:0007669"/>
    <property type="project" value="UniProtKB-UniRule"/>
</dbReference>
<dbReference type="CDD" id="cd02573">
    <property type="entry name" value="PseudoU_synth_EcTruB"/>
    <property type="match status" value="1"/>
</dbReference>
<dbReference type="Gene3D" id="3.30.2350.10">
    <property type="entry name" value="Pseudouridine synthase"/>
    <property type="match status" value="1"/>
</dbReference>
<dbReference type="HAMAP" id="MF_01080">
    <property type="entry name" value="TruB_bact"/>
    <property type="match status" value="1"/>
</dbReference>
<dbReference type="InterPro" id="IPR020103">
    <property type="entry name" value="PsdUridine_synth_cat_dom_sf"/>
</dbReference>
<dbReference type="InterPro" id="IPR002501">
    <property type="entry name" value="PsdUridine_synth_N"/>
</dbReference>
<dbReference type="InterPro" id="IPR014780">
    <property type="entry name" value="tRNA_psdUridine_synth_TruB"/>
</dbReference>
<dbReference type="NCBIfam" id="TIGR00431">
    <property type="entry name" value="TruB"/>
    <property type="match status" value="1"/>
</dbReference>
<dbReference type="PANTHER" id="PTHR13767:SF2">
    <property type="entry name" value="PSEUDOURIDYLATE SYNTHASE TRUB1"/>
    <property type="match status" value="1"/>
</dbReference>
<dbReference type="PANTHER" id="PTHR13767">
    <property type="entry name" value="TRNA-PSEUDOURIDINE SYNTHASE"/>
    <property type="match status" value="1"/>
</dbReference>
<dbReference type="Pfam" id="PF01509">
    <property type="entry name" value="TruB_N"/>
    <property type="match status" value="1"/>
</dbReference>
<dbReference type="SUPFAM" id="SSF55120">
    <property type="entry name" value="Pseudouridine synthase"/>
    <property type="match status" value="1"/>
</dbReference>